<gene>
    <name evidence="1" type="primary">rpsF</name>
    <name type="ordered locus">FP1851</name>
</gene>
<sequence>MNHYETVFILNPVLSETQVKETVSKFEDYLTSKGATMVSKEDWGLKKMAYEIQNKKSGFYHLFEFTVPGEVLIGFETEFRRDERVMRFLTVSLDKHAISWAERRRAKLKATKA</sequence>
<name>RS6_FLAPJ</name>
<comment type="function">
    <text evidence="1">Binds together with bS18 to 16S ribosomal RNA.</text>
</comment>
<comment type="similarity">
    <text evidence="1">Belongs to the bacterial ribosomal protein bS6 family.</text>
</comment>
<reference key="1">
    <citation type="journal article" date="2007" name="Nat. Biotechnol.">
        <title>Complete genome sequence of the fish pathogen Flavobacterium psychrophilum.</title>
        <authorList>
            <person name="Duchaud E."/>
            <person name="Boussaha M."/>
            <person name="Loux V."/>
            <person name="Bernardet J.-F."/>
            <person name="Michel C."/>
            <person name="Kerouault B."/>
            <person name="Mondot S."/>
            <person name="Nicolas P."/>
            <person name="Bossy R."/>
            <person name="Caron C."/>
            <person name="Bessieres P."/>
            <person name="Gibrat J.-F."/>
            <person name="Claverol S."/>
            <person name="Dumetz F."/>
            <person name="Le Henaff M."/>
            <person name="Benmansour A."/>
        </authorList>
    </citation>
    <scope>NUCLEOTIDE SEQUENCE [LARGE SCALE GENOMIC DNA]</scope>
    <source>
        <strain>ATCC 49511 / DSM 21280 / CIP 103535 / JIP02/86</strain>
    </source>
</reference>
<protein>
    <recommendedName>
        <fullName evidence="1">Small ribosomal subunit protein bS6</fullName>
    </recommendedName>
    <alternativeName>
        <fullName evidence="2">30S ribosomal protein S6</fullName>
    </alternativeName>
</protein>
<keyword id="KW-1185">Reference proteome</keyword>
<keyword id="KW-0687">Ribonucleoprotein</keyword>
<keyword id="KW-0689">Ribosomal protein</keyword>
<keyword id="KW-0694">RNA-binding</keyword>
<keyword id="KW-0699">rRNA-binding</keyword>
<feature type="chain" id="PRO_1000005262" description="Small ribosomal subunit protein bS6">
    <location>
        <begin position="1"/>
        <end position="113"/>
    </location>
</feature>
<accession>A6H0P3</accession>
<dbReference type="EMBL" id="AM398681">
    <property type="protein sequence ID" value="CAL43917.1"/>
    <property type="molecule type" value="Genomic_DNA"/>
</dbReference>
<dbReference type="RefSeq" id="WP_011963956.1">
    <property type="nucleotide sequence ID" value="NC_009613.3"/>
</dbReference>
<dbReference type="RefSeq" id="YP_001296720.1">
    <property type="nucleotide sequence ID" value="NC_009613.3"/>
</dbReference>
<dbReference type="SMR" id="A6H0P3"/>
<dbReference type="STRING" id="402612.FP1851"/>
<dbReference type="EnsemblBacteria" id="CAL43917">
    <property type="protein sequence ID" value="CAL43917"/>
    <property type="gene ID" value="FP1851"/>
</dbReference>
<dbReference type="GeneID" id="66551965"/>
<dbReference type="KEGG" id="fps:FP1851"/>
<dbReference type="PATRIC" id="fig|402612.5.peg.1877"/>
<dbReference type="eggNOG" id="COG0360">
    <property type="taxonomic scope" value="Bacteria"/>
</dbReference>
<dbReference type="HOGENOM" id="CLU_113441_4_3_10"/>
<dbReference type="OrthoDB" id="9812702at2"/>
<dbReference type="Proteomes" id="UP000006394">
    <property type="component" value="Chromosome"/>
</dbReference>
<dbReference type="GO" id="GO:0005737">
    <property type="term" value="C:cytoplasm"/>
    <property type="evidence" value="ECO:0007669"/>
    <property type="project" value="UniProtKB-ARBA"/>
</dbReference>
<dbReference type="GO" id="GO:1990904">
    <property type="term" value="C:ribonucleoprotein complex"/>
    <property type="evidence" value="ECO:0007669"/>
    <property type="project" value="UniProtKB-KW"/>
</dbReference>
<dbReference type="GO" id="GO:0005840">
    <property type="term" value="C:ribosome"/>
    <property type="evidence" value="ECO:0007669"/>
    <property type="project" value="UniProtKB-KW"/>
</dbReference>
<dbReference type="GO" id="GO:0070181">
    <property type="term" value="F:small ribosomal subunit rRNA binding"/>
    <property type="evidence" value="ECO:0007669"/>
    <property type="project" value="TreeGrafter"/>
</dbReference>
<dbReference type="GO" id="GO:0003735">
    <property type="term" value="F:structural constituent of ribosome"/>
    <property type="evidence" value="ECO:0007669"/>
    <property type="project" value="InterPro"/>
</dbReference>
<dbReference type="GO" id="GO:0006412">
    <property type="term" value="P:translation"/>
    <property type="evidence" value="ECO:0007669"/>
    <property type="project" value="UniProtKB-UniRule"/>
</dbReference>
<dbReference type="CDD" id="cd00473">
    <property type="entry name" value="bS6"/>
    <property type="match status" value="1"/>
</dbReference>
<dbReference type="Gene3D" id="3.30.70.60">
    <property type="match status" value="1"/>
</dbReference>
<dbReference type="HAMAP" id="MF_00360">
    <property type="entry name" value="Ribosomal_bS6"/>
    <property type="match status" value="1"/>
</dbReference>
<dbReference type="InterPro" id="IPR000529">
    <property type="entry name" value="Ribosomal_bS6"/>
</dbReference>
<dbReference type="InterPro" id="IPR035980">
    <property type="entry name" value="Ribosomal_bS6_sf"/>
</dbReference>
<dbReference type="InterPro" id="IPR020814">
    <property type="entry name" value="Ribosomal_S6_plastid/chlpt"/>
</dbReference>
<dbReference type="InterPro" id="IPR014717">
    <property type="entry name" value="Transl_elong_EF1B/ribsomal_bS6"/>
</dbReference>
<dbReference type="NCBIfam" id="TIGR00166">
    <property type="entry name" value="S6"/>
    <property type="match status" value="1"/>
</dbReference>
<dbReference type="PANTHER" id="PTHR21011">
    <property type="entry name" value="MITOCHONDRIAL 28S RIBOSOMAL PROTEIN S6"/>
    <property type="match status" value="1"/>
</dbReference>
<dbReference type="PANTHER" id="PTHR21011:SF1">
    <property type="entry name" value="SMALL RIBOSOMAL SUBUNIT PROTEIN BS6M"/>
    <property type="match status" value="1"/>
</dbReference>
<dbReference type="Pfam" id="PF01250">
    <property type="entry name" value="Ribosomal_S6"/>
    <property type="match status" value="1"/>
</dbReference>
<dbReference type="SUPFAM" id="SSF54995">
    <property type="entry name" value="Ribosomal protein S6"/>
    <property type="match status" value="1"/>
</dbReference>
<proteinExistence type="inferred from homology"/>
<organism>
    <name type="scientific">Flavobacterium psychrophilum (strain ATCC 49511 / DSM 21280 / CIP 103535 / JIP02/86)</name>
    <dbReference type="NCBI Taxonomy" id="402612"/>
    <lineage>
        <taxon>Bacteria</taxon>
        <taxon>Pseudomonadati</taxon>
        <taxon>Bacteroidota</taxon>
        <taxon>Flavobacteriia</taxon>
        <taxon>Flavobacteriales</taxon>
        <taxon>Flavobacteriaceae</taxon>
        <taxon>Flavobacterium</taxon>
    </lineage>
</organism>
<evidence type="ECO:0000255" key="1">
    <source>
        <dbReference type="HAMAP-Rule" id="MF_00360"/>
    </source>
</evidence>
<evidence type="ECO:0000305" key="2"/>